<keyword id="KW-0068">Autocatalytic cleavage</keyword>
<keyword id="KW-0963">Cytoplasm</keyword>
<keyword id="KW-0378">Hydrolase</keyword>
<keyword id="KW-0645">Protease</keyword>
<keyword id="KW-0647">Proteasome</keyword>
<keyword id="KW-0888">Threonine protease</keyword>
<keyword id="KW-0865">Zymogen</keyword>
<comment type="function">
    <text evidence="1">Component of the proteasome core, a large protease complex with broad specificity involved in protein degradation.</text>
</comment>
<comment type="catalytic activity">
    <reaction evidence="1">
        <text>Cleavage of peptide bonds with very broad specificity.</text>
        <dbReference type="EC" id="3.4.25.1"/>
    </reaction>
</comment>
<comment type="activity regulation">
    <text evidence="1">The formation of the proteasomal ATPase PAN-20S proteasome complex, via the docking of the C-termini of PAN into the intersubunit pockets in the alpha-rings, triggers opening of the gate for substrate entry. Interconversion between the open-gate and close-gate conformations leads to a dynamic regulation of the 20S proteasome proteolysis activity.</text>
</comment>
<comment type="subunit">
    <text evidence="1">The 20S proteasome core is composed of 14 alpha and 14 beta subunits that assemble into four stacked heptameric rings, resulting in a barrel-shaped structure. The two inner rings, each composed of seven catalytic beta subunits, are sandwiched by two outer rings, each composed of seven alpha subunits. The catalytic chamber with the active sites is on the inside of the barrel. Has a gated structure, the ends of the cylinder being occluded by the N-termini of the alpha-subunits. Is capped at one or both ends by the proteasome regulatory ATPase, PAN.</text>
</comment>
<comment type="subcellular location">
    <subcellularLocation>
        <location evidence="1">Cytoplasm</location>
    </subcellularLocation>
</comment>
<comment type="similarity">
    <text evidence="1">Belongs to the peptidase T1B family.</text>
</comment>
<evidence type="ECO:0000255" key="1">
    <source>
        <dbReference type="HAMAP-Rule" id="MF_02113"/>
    </source>
</evidence>
<proteinExistence type="inferred from homology"/>
<protein>
    <recommendedName>
        <fullName evidence="1">Proteasome subunit beta</fullName>
        <ecNumber evidence="1">3.4.25.1</ecNumber>
    </recommendedName>
    <alternativeName>
        <fullName evidence="1">20S proteasome beta subunit</fullName>
    </alternativeName>
    <alternativeName>
        <fullName evidence="1">Proteasome core protein PsmB</fullName>
    </alternativeName>
</protein>
<sequence>MISNSEYHKEYMKGTTTVGLLCKDGVVLATDKRATMGNLIADKEAKKLYKIDDYIAMTIAGSVGDAQSLIRLISAEAKIYKMRTGNNMTPLSCTTLISNVLHGNRHYPLLTQLILGGYDLINGAKLFSLDPVGGINEESSFTATGSGSPTAYGVLEAEYRSDVTIDKGLLVAVKALSSAMQRDAYSGNGISLAHINKDGVNIYSDEEIEGFLKKINKKR</sequence>
<reference key="1">
    <citation type="submission" date="2007-10" db="EMBL/GenBank/DDBJ databases">
        <title>Complete sequence of Methanococcus maripaludis C6.</title>
        <authorList>
            <consortium name="US DOE Joint Genome Institute"/>
            <person name="Copeland A."/>
            <person name="Lucas S."/>
            <person name="Lapidus A."/>
            <person name="Barry K."/>
            <person name="Glavina del Rio T."/>
            <person name="Dalin E."/>
            <person name="Tice H."/>
            <person name="Pitluck S."/>
            <person name="Clum A."/>
            <person name="Schmutz J."/>
            <person name="Larimer F."/>
            <person name="Land M."/>
            <person name="Hauser L."/>
            <person name="Kyrpides N."/>
            <person name="Mikhailova N."/>
            <person name="Sieprawska-Lupa M."/>
            <person name="Whitman W.B."/>
            <person name="Richardson P."/>
        </authorList>
    </citation>
    <scope>NUCLEOTIDE SEQUENCE [LARGE SCALE GENOMIC DNA]</scope>
    <source>
        <strain>C6 / ATCC BAA-1332</strain>
    </source>
</reference>
<accession>A9A788</accession>
<name>PSB_METM6</name>
<organism>
    <name type="scientific">Methanococcus maripaludis (strain C6 / ATCC BAA-1332)</name>
    <dbReference type="NCBI Taxonomy" id="444158"/>
    <lineage>
        <taxon>Archaea</taxon>
        <taxon>Methanobacteriati</taxon>
        <taxon>Methanobacteriota</taxon>
        <taxon>Methanomada group</taxon>
        <taxon>Methanococci</taxon>
        <taxon>Methanococcales</taxon>
        <taxon>Methanococcaceae</taxon>
        <taxon>Methanococcus</taxon>
    </lineage>
</organism>
<feature type="propeptide" id="PRO_0000397350" description="Removed in mature form; by autocatalysis" evidence="1">
    <location>
        <begin position="1"/>
        <end position="14"/>
    </location>
</feature>
<feature type="chain" id="PRO_0000397351" description="Proteasome subunit beta">
    <location>
        <begin position="15"/>
        <end position="219"/>
    </location>
</feature>
<feature type="active site" description="Nucleophile" evidence="1">
    <location>
        <position position="15"/>
    </location>
</feature>
<gene>
    <name evidence="1" type="primary">psmB</name>
    <name type="ordered locus">MmarC6_0189</name>
</gene>
<dbReference type="EC" id="3.4.25.1" evidence="1"/>
<dbReference type="EMBL" id="CP000867">
    <property type="protein sequence ID" value="ABX01012.1"/>
    <property type="molecule type" value="Genomic_DNA"/>
</dbReference>
<dbReference type="SMR" id="A9A788"/>
<dbReference type="STRING" id="444158.MmarC6_0189"/>
<dbReference type="MEROPS" id="T01.002"/>
<dbReference type="KEGG" id="mmx:MmarC6_0189"/>
<dbReference type="eggNOG" id="arCOG00970">
    <property type="taxonomic scope" value="Archaea"/>
</dbReference>
<dbReference type="HOGENOM" id="CLU_035750_7_2_2"/>
<dbReference type="OrthoDB" id="6330at2157"/>
<dbReference type="PhylomeDB" id="A9A788"/>
<dbReference type="GO" id="GO:0005737">
    <property type="term" value="C:cytoplasm"/>
    <property type="evidence" value="ECO:0007669"/>
    <property type="project" value="UniProtKB-SubCell"/>
</dbReference>
<dbReference type="GO" id="GO:0019774">
    <property type="term" value="C:proteasome core complex, beta-subunit complex"/>
    <property type="evidence" value="ECO:0007669"/>
    <property type="project" value="UniProtKB-UniRule"/>
</dbReference>
<dbReference type="GO" id="GO:0004298">
    <property type="term" value="F:threonine-type endopeptidase activity"/>
    <property type="evidence" value="ECO:0007669"/>
    <property type="project" value="UniProtKB-UniRule"/>
</dbReference>
<dbReference type="GO" id="GO:0010498">
    <property type="term" value="P:proteasomal protein catabolic process"/>
    <property type="evidence" value="ECO:0007669"/>
    <property type="project" value="UniProtKB-UniRule"/>
</dbReference>
<dbReference type="FunFam" id="3.60.20.10:FF:000049">
    <property type="entry name" value="Proteasome subunit beta"/>
    <property type="match status" value="1"/>
</dbReference>
<dbReference type="Gene3D" id="3.60.20.10">
    <property type="entry name" value="Glutamine Phosphoribosylpyrophosphate, subunit 1, domain 1"/>
    <property type="match status" value="1"/>
</dbReference>
<dbReference type="HAMAP" id="MF_02113_A">
    <property type="entry name" value="Proteasome_B_A"/>
    <property type="match status" value="1"/>
</dbReference>
<dbReference type="InterPro" id="IPR029055">
    <property type="entry name" value="Ntn_hydrolases_N"/>
</dbReference>
<dbReference type="InterPro" id="IPR019983">
    <property type="entry name" value="Pept_T1A_Psome_bsu_arc"/>
</dbReference>
<dbReference type="InterPro" id="IPR000243">
    <property type="entry name" value="Pept_T1A_subB"/>
</dbReference>
<dbReference type="InterPro" id="IPR016050">
    <property type="entry name" value="Proteasome_bsu_CS"/>
</dbReference>
<dbReference type="InterPro" id="IPR001353">
    <property type="entry name" value="Proteasome_sua/b"/>
</dbReference>
<dbReference type="InterPro" id="IPR023333">
    <property type="entry name" value="Proteasome_suB-type"/>
</dbReference>
<dbReference type="NCBIfam" id="TIGR03634">
    <property type="entry name" value="arc_protsome_B"/>
    <property type="match status" value="1"/>
</dbReference>
<dbReference type="PANTHER" id="PTHR32194:SF0">
    <property type="entry name" value="ATP-DEPENDENT PROTEASE SUBUNIT HSLV"/>
    <property type="match status" value="1"/>
</dbReference>
<dbReference type="PANTHER" id="PTHR32194">
    <property type="entry name" value="METALLOPROTEASE TLDD"/>
    <property type="match status" value="1"/>
</dbReference>
<dbReference type="Pfam" id="PF00227">
    <property type="entry name" value="Proteasome"/>
    <property type="match status" value="1"/>
</dbReference>
<dbReference type="PRINTS" id="PR00141">
    <property type="entry name" value="PROTEASOME"/>
</dbReference>
<dbReference type="SUPFAM" id="SSF56235">
    <property type="entry name" value="N-terminal nucleophile aminohydrolases (Ntn hydrolases)"/>
    <property type="match status" value="1"/>
</dbReference>
<dbReference type="PROSITE" id="PS00854">
    <property type="entry name" value="PROTEASOME_BETA_1"/>
    <property type="match status" value="1"/>
</dbReference>
<dbReference type="PROSITE" id="PS51476">
    <property type="entry name" value="PROTEASOME_BETA_2"/>
    <property type="match status" value="1"/>
</dbReference>